<protein>
    <recommendedName>
        <fullName evidence="8">Serine/threonine-protein kinase BSK8</fullName>
        <ecNumber evidence="8">2.7.11.1</ecNumber>
    </recommendedName>
    <alternativeName>
        <fullName evidence="7">Brassinosteroid-signaling kinase 8</fullName>
    </alternativeName>
</protein>
<dbReference type="EC" id="2.7.11.1" evidence="8"/>
<dbReference type="EMBL" id="AB019225">
    <property type="protein sequence ID" value="BAB11102.1"/>
    <property type="molecule type" value="Genomic_DNA"/>
</dbReference>
<dbReference type="EMBL" id="CP002688">
    <property type="protein sequence ID" value="AED94658.1"/>
    <property type="molecule type" value="Genomic_DNA"/>
</dbReference>
<dbReference type="EMBL" id="BT029016">
    <property type="protein sequence ID" value="ABI93925.1"/>
    <property type="molecule type" value="mRNA"/>
</dbReference>
<dbReference type="EMBL" id="AK117571">
    <property type="protein sequence ID" value="BAC42231.1"/>
    <property type="molecule type" value="mRNA"/>
</dbReference>
<dbReference type="RefSeq" id="NP_198942.1">
    <property type="nucleotide sequence ID" value="NM_123491.4"/>
</dbReference>
<dbReference type="PDB" id="4I92">
    <property type="method" value="X-ray"/>
    <property type="resolution" value="1.60 A"/>
    <property type="chains" value="A=40-328"/>
</dbReference>
<dbReference type="PDB" id="4I93">
    <property type="method" value="X-ray"/>
    <property type="resolution" value="1.50 A"/>
    <property type="chains" value="A/B=40-328"/>
</dbReference>
<dbReference type="PDB" id="4I94">
    <property type="method" value="X-ray"/>
    <property type="resolution" value="1.80 A"/>
    <property type="chains" value="A/B=40-328"/>
</dbReference>
<dbReference type="PDBsum" id="4I92"/>
<dbReference type="PDBsum" id="4I93"/>
<dbReference type="PDBsum" id="4I94"/>
<dbReference type="SMR" id="Q9FHD7"/>
<dbReference type="BioGRID" id="19378">
    <property type="interactions" value="11"/>
</dbReference>
<dbReference type="FunCoup" id="Q9FHD7">
    <property type="interactions" value="524"/>
</dbReference>
<dbReference type="STRING" id="3702.Q9FHD7"/>
<dbReference type="iPTMnet" id="Q9FHD7"/>
<dbReference type="SwissPalm" id="Q9FHD7"/>
<dbReference type="PaxDb" id="3702-AT5G41260.1"/>
<dbReference type="ProteomicsDB" id="240290"/>
<dbReference type="EnsemblPlants" id="AT5G41260.1">
    <property type="protein sequence ID" value="AT5G41260.1"/>
    <property type="gene ID" value="AT5G41260"/>
</dbReference>
<dbReference type="GeneID" id="834127"/>
<dbReference type="Gramene" id="AT5G41260.1">
    <property type="protein sequence ID" value="AT5G41260.1"/>
    <property type="gene ID" value="AT5G41260"/>
</dbReference>
<dbReference type="KEGG" id="ath:AT5G41260"/>
<dbReference type="Araport" id="AT5G41260"/>
<dbReference type="TAIR" id="AT5G41260">
    <property type="gene designation" value="BSK8"/>
</dbReference>
<dbReference type="eggNOG" id="ENOG502QSE9">
    <property type="taxonomic scope" value="Eukaryota"/>
</dbReference>
<dbReference type="HOGENOM" id="CLU_000288_15_0_1"/>
<dbReference type="InParanoid" id="Q9FHD7"/>
<dbReference type="OMA" id="NTGYKDD"/>
<dbReference type="OrthoDB" id="2335338at2759"/>
<dbReference type="PhylomeDB" id="Q9FHD7"/>
<dbReference type="EvolutionaryTrace" id="Q9FHD7"/>
<dbReference type="PRO" id="PR:Q9FHD7"/>
<dbReference type="Proteomes" id="UP000006548">
    <property type="component" value="Chromosome 5"/>
</dbReference>
<dbReference type="ExpressionAtlas" id="Q9FHD7">
    <property type="expression patterns" value="baseline and differential"/>
</dbReference>
<dbReference type="GO" id="GO:0005886">
    <property type="term" value="C:plasma membrane"/>
    <property type="evidence" value="ECO:0000314"/>
    <property type="project" value="TAIR"/>
</dbReference>
<dbReference type="GO" id="GO:0009536">
    <property type="term" value="C:plastid"/>
    <property type="evidence" value="ECO:0007005"/>
    <property type="project" value="TAIR"/>
</dbReference>
<dbReference type="GO" id="GO:0005524">
    <property type="term" value="F:ATP binding"/>
    <property type="evidence" value="ECO:0007669"/>
    <property type="project" value="UniProtKB-KW"/>
</dbReference>
<dbReference type="GO" id="GO:0106310">
    <property type="term" value="F:protein serine kinase activity"/>
    <property type="evidence" value="ECO:0007669"/>
    <property type="project" value="RHEA"/>
</dbReference>
<dbReference type="GO" id="GO:0004674">
    <property type="term" value="F:protein serine/threonine kinase activity"/>
    <property type="evidence" value="ECO:0007669"/>
    <property type="project" value="UniProtKB-KW"/>
</dbReference>
<dbReference type="GO" id="GO:0009742">
    <property type="term" value="P:brassinosteroid mediated signaling pathway"/>
    <property type="evidence" value="ECO:0000315"/>
    <property type="project" value="UniProtKB"/>
</dbReference>
<dbReference type="FunFam" id="1.25.40.10:FF:000016">
    <property type="entry name" value="probable serine/threonine-protein kinase At4g35230"/>
    <property type="match status" value="1"/>
</dbReference>
<dbReference type="FunFam" id="3.30.200.20:FF:000154">
    <property type="entry name" value="probable serine/threonine-protein kinase At4g35230"/>
    <property type="match status" value="1"/>
</dbReference>
<dbReference type="FunFam" id="1.10.510.10:FF:000069">
    <property type="entry name" value="probable serine/threonine-protein kinase At5g41260"/>
    <property type="match status" value="1"/>
</dbReference>
<dbReference type="Gene3D" id="3.30.200.20">
    <property type="entry name" value="Phosphorylase Kinase, domain 1"/>
    <property type="match status" value="1"/>
</dbReference>
<dbReference type="Gene3D" id="1.25.40.10">
    <property type="entry name" value="Tetratricopeptide repeat domain"/>
    <property type="match status" value="1"/>
</dbReference>
<dbReference type="Gene3D" id="1.10.510.10">
    <property type="entry name" value="Transferase(Phosphotransferase) domain 1"/>
    <property type="match status" value="1"/>
</dbReference>
<dbReference type="InterPro" id="IPR045845">
    <property type="entry name" value="BSK"/>
</dbReference>
<dbReference type="InterPro" id="IPR011009">
    <property type="entry name" value="Kinase-like_dom_sf"/>
</dbReference>
<dbReference type="InterPro" id="IPR000719">
    <property type="entry name" value="Prot_kinase_dom"/>
</dbReference>
<dbReference type="InterPro" id="IPR001245">
    <property type="entry name" value="Ser-Thr/Tyr_kinase_cat_dom"/>
</dbReference>
<dbReference type="InterPro" id="IPR011990">
    <property type="entry name" value="TPR-like_helical_dom_sf"/>
</dbReference>
<dbReference type="PANTHER" id="PTHR45863">
    <property type="entry name" value="SERINE/THREONINE-PROTEIN KINASE BSK5"/>
    <property type="match status" value="1"/>
</dbReference>
<dbReference type="PANTHER" id="PTHR45863:SF2">
    <property type="entry name" value="SERINE_THREONINE-PROTEIN KINASE BSK7-RELATED"/>
    <property type="match status" value="1"/>
</dbReference>
<dbReference type="Pfam" id="PF07714">
    <property type="entry name" value="PK_Tyr_Ser-Thr"/>
    <property type="match status" value="1"/>
</dbReference>
<dbReference type="SUPFAM" id="SSF56112">
    <property type="entry name" value="Protein kinase-like (PK-like)"/>
    <property type="match status" value="1"/>
</dbReference>
<dbReference type="SUPFAM" id="SSF48452">
    <property type="entry name" value="TPR-like"/>
    <property type="match status" value="1"/>
</dbReference>
<dbReference type="PROSITE" id="PS50011">
    <property type="entry name" value="PROTEIN_KINASE_DOM"/>
    <property type="match status" value="1"/>
</dbReference>
<reference key="1">
    <citation type="journal article" date="2000" name="DNA Res.">
        <title>Structural analysis of Arabidopsis thaliana chromosome 5. X. Sequence features of the regions of 3,076,755 bp covered by sixty P1 and TAC clones.</title>
        <authorList>
            <person name="Sato S."/>
            <person name="Nakamura Y."/>
            <person name="Kaneko T."/>
            <person name="Katoh T."/>
            <person name="Asamizu E."/>
            <person name="Kotani H."/>
            <person name="Tabata S."/>
        </authorList>
    </citation>
    <scope>NUCLEOTIDE SEQUENCE [LARGE SCALE GENOMIC DNA]</scope>
    <source>
        <strain>cv. Columbia</strain>
    </source>
</reference>
<reference key="2">
    <citation type="journal article" date="2017" name="Plant J.">
        <title>Araport11: a complete reannotation of the Arabidopsis thaliana reference genome.</title>
        <authorList>
            <person name="Cheng C.Y."/>
            <person name="Krishnakumar V."/>
            <person name="Chan A.P."/>
            <person name="Thibaud-Nissen F."/>
            <person name="Schobel S."/>
            <person name="Town C.D."/>
        </authorList>
    </citation>
    <scope>GENOME REANNOTATION</scope>
    <source>
        <strain>cv. Columbia</strain>
    </source>
</reference>
<reference key="3">
    <citation type="submission" date="2006-09" db="EMBL/GenBank/DDBJ databases">
        <title>Arabidopsis ORF clones.</title>
        <authorList>
            <person name="Bautista V.R."/>
            <person name="Kim C.J."/>
            <person name="Chen H."/>
            <person name="Quinitio C."/>
            <person name="Ecker J.R."/>
        </authorList>
    </citation>
    <scope>NUCLEOTIDE SEQUENCE [LARGE SCALE MRNA]</scope>
    <source>
        <strain>cv. Columbia</strain>
    </source>
</reference>
<reference key="4">
    <citation type="journal article" date="2002" name="Science">
        <title>Functional annotation of a full-length Arabidopsis cDNA collection.</title>
        <authorList>
            <person name="Seki M."/>
            <person name="Narusaka M."/>
            <person name="Kamiya A."/>
            <person name="Ishida J."/>
            <person name="Satou M."/>
            <person name="Sakurai T."/>
            <person name="Nakajima M."/>
            <person name="Enju A."/>
            <person name="Akiyama K."/>
            <person name="Oono Y."/>
            <person name="Muramatsu M."/>
            <person name="Hayashizaki Y."/>
            <person name="Kawai J."/>
            <person name="Carninci P."/>
            <person name="Itoh M."/>
            <person name="Ishii Y."/>
            <person name="Arakawa T."/>
            <person name="Shibata K."/>
            <person name="Shinagawa A."/>
            <person name="Shinozaki K."/>
        </authorList>
    </citation>
    <scope>NUCLEOTIDE SEQUENCE [LARGE SCALE MRNA] OF 269-487</scope>
    <source>
        <strain>cv. Columbia</strain>
    </source>
</reference>
<reference key="5">
    <citation type="journal article" date="2003" name="J. Biol. Chem.">
        <title>Unexpected protein families including cell defense components feature in the N-myristoylome of a higher eukaryote.</title>
        <authorList>
            <person name="Boisson B."/>
            <person name="Giglione C."/>
            <person name="Meinnel T."/>
        </authorList>
    </citation>
    <scope>MYRISTOYLATION AT GLY-2</scope>
</reference>
<reference key="6">
    <citation type="journal article" date="2007" name="Mol. Cell. Proteomics">
        <title>Temporal analysis of sucrose-induced phosphorylation changes in plasma membrane proteins of Arabidopsis.</title>
        <authorList>
            <person name="Niittylae T."/>
            <person name="Fuglsang A.T."/>
            <person name="Palmgren M.G."/>
            <person name="Frommer W.B."/>
            <person name="Schulze W.X."/>
        </authorList>
    </citation>
    <scope>PHOSPHORYLATION [LARGE SCALE ANALYSIS] AT SER-20</scope>
    <scope>IDENTIFICATION BY MASS SPECTROMETRY [LARGE SCALE ANALYSIS]</scope>
    <source>
        <tissue>Seedling</tissue>
    </source>
</reference>
<reference key="7">
    <citation type="journal article" date="2009" name="Plant Physiol.">
        <title>Large-scale Arabidopsis phosphoproteome profiling reveals novel chloroplast kinase substrates and phosphorylation networks.</title>
        <authorList>
            <person name="Reiland S."/>
            <person name="Messerli G."/>
            <person name="Baerenfaller K."/>
            <person name="Gerrits B."/>
            <person name="Endler A."/>
            <person name="Grossmann J."/>
            <person name="Gruissem W."/>
            <person name="Baginsky S."/>
        </authorList>
    </citation>
    <scope>IDENTIFICATION BY MASS SPECTROMETRY [LARGE SCALE ANALYSIS]</scope>
</reference>
<reference key="8">
    <citation type="journal article" date="2011" name="Mol. Plant Pathol.">
        <title>Physical association of pattern-triggered immunity (PTI) and effector-triggered immunity (ETI) immune receptors in Arabidopsis.</title>
        <authorList>
            <person name="Qi Y."/>
            <person name="Tsuda K."/>
            <person name="Glazebrook J."/>
            <person name="Katagiri F."/>
        </authorList>
    </citation>
    <scope>INTERACTION WITH FLS2</scope>
    <scope>SUBCELLULAR LOCATION</scope>
</reference>
<reference key="9">
    <citation type="journal article" date="2013" name="Plant J.">
        <title>BSKs are partially redundant positive regulators of brassinosteroid signaling in Arabidopsis.</title>
        <authorList>
            <person name="Sreeramulu S."/>
            <person name="Mostizky Y."/>
            <person name="Sunitha S."/>
            <person name="Shani E."/>
            <person name="Nahum H."/>
            <person name="Salomon D."/>
            <person name="Hayun L.B."/>
            <person name="Gruetter C."/>
            <person name="Rauh D."/>
            <person name="Ori N."/>
            <person name="Sessa G."/>
        </authorList>
    </citation>
    <scope>FUNCTION</scope>
    <scope>INTERACTION WITH ASK7/BIN2; BSK1; BSK5; BSK6 AND BSK11</scope>
    <scope>PHOSPHORYLATION</scope>
    <scope>MUTAGENESIS OF SER-213</scope>
</reference>
<reference key="10">
    <citation type="journal article" date="2014" name="J. Proteome Res.">
        <title>A kinase-phosphatase signaling module with BSK8 and BSL2 involved in regulation of sucrose-phosphate synthase.</title>
        <authorList>
            <person name="Wu X."/>
            <person name="Sklodowski K."/>
            <person name="Encke B."/>
            <person name="Schulze W.X."/>
        </authorList>
    </citation>
    <scope>FUNCTION</scope>
    <scope>INTERACTION WITH BSL2</scope>
    <scope>SUBCELLULAR LOCATION</scope>
    <scope>PHOSPHORYLATION AT SER-20 AND SER-213</scope>
    <scope>MUTAGENESIS OF SER-20 AND SER-213</scope>
</reference>
<reference key="11">
    <citation type="journal article" date="2013" name="J. Mol. Biol.">
        <title>Structural characterization of the RLCK family member BSK8: a pseudokinase with an unprecedented architecture.</title>
        <authorList>
            <person name="Grutter C."/>
            <person name="Sreeramulu S."/>
            <person name="Sessa G."/>
            <person name="Rauh D."/>
        </authorList>
    </citation>
    <scope>X-RAY CRYSTALLOGRAPHY (1.50 ANGSTROMS) OF 40-328 IN COMPLEX WITH ATP ANALOG</scope>
</reference>
<evidence type="ECO:0000255" key="1">
    <source>
        <dbReference type="PROSITE-ProRule" id="PRU00159"/>
    </source>
</evidence>
<evidence type="ECO:0000269" key="2">
    <source>
    </source>
</evidence>
<evidence type="ECO:0000269" key="3">
    <source>
    </source>
</evidence>
<evidence type="ECO:0000269" key="4">
    <source>
    </source>
</evidence>
<evidence type="ECO:0000269" key="5">
    <source>
    </source>
</evidence>
<evidence type="ECO:0000269" key="6">
    <source>
    </source>
</evidence>
<evidence type="ECO:0000303" key="7">
    <source>
    </source>
</evidence>
<evidence type="ECO:0000305" key="8"/>
<evidence type="ECO:0000305" key="9">
    <source>
    </source>
</evidence>
<evidence type="ECO:0000312" key="10">
    <source>
        <dbReference type="Araport" id="AT5G41260"/>
    </source>
</evidence>
<evidence type="ECO:0000312" key="11">
    <source>
        <dbReference type="EMBL" id="BAB11102.1"/>
    </source>
</evidence>
<evidence type="ECO:0007744" key="12">
    <source>
        <dbReference type="PDB" id="4I94"/>
    </source>
</evidence>
<evidence type="ECO:0007744" key="13">
    <source>
    </source>
</evidence>
<evidence type="ECO:0007829" key="14">
    <source>
        <dbReference type="PDB" id="4I92"/>
    </source>
</evidence>
<evidence type="ECO:0007829" key="15">
    <source>
        <dbReference type="PDB" id="4I93"/>
    </source>
</evidence>
<evidence type="ECO:0007829" key="16">
    <source>
        <dbReference type="PDB" id="4I94"/>
    </source>
</evidence>
<sequence length="487" mass="54625">MGCEVSKLSALCCVSESGRSNPDVTGLDEEGRGESNDLPQFREFSIETIRNATSGFAAENIVSEHGERAPNVVYKGKLENQRRIAVKRFNRKSWPDSRQFLEEAKAVGQLRNHRMANLLGCCYEDEERLLIAEFMPNETLAKHLFHWESQPMKWAMRLRVALHIAQALEYCTSKGRALYHDLNAYRVLFDDDANPRLSCFGLMKNSRDGKSYSTNLAFTPPEYLRTGRVTPESVIYSFGTLLLDLLSGKHIPPSHALDLIRDRNIQMLMDSGLEGQFSSDDGTELIRLASRCLQYEPRERPNPKSLVSAMIPLQKDLEIASHQLLGVPNSATTTALSPLGEACLRSDLTAIHEIIEKLGYKDDEGATTELSFQMWTDQMQDTLVFKKKGDSAFRHKDFAKAIECYSQFIEVGTMGSPTVHARQSLCYLMNDMPREALNNAMQAQVISPAWHIASYLQAVALSALGQENEAHTALKDGAMLESKRNPL</sequence>
<proteinExistence type="evidence at protein level"/>
<feature type="initiator methionine" description="Removed" evidence="2">
    <location>
        <position position="1"/>
    </location>
</feature>
<feature type="chain" id="PRO_0000324845" description="Serine/threonine-protein kinase BSK8">
    <location>
        <begin position="2"/>
        <end position="487"/>
    </location>
</feature>
<feature type="domain" description="Protein kinase" evidence="1">
    <location>
        <begin position="59"/>
        <end position="325"/>
    </location>
</feature>
<feature type="active site" description="Proton acceptor" evidence="1">
    <location>
        <position position="181"/>
    </location>
</feature>
<feature type="binding site" evidence="1">
    <location>
        <begin position="65"/>
        <end position="73"/>
    </location>
    <ligand>
        <name>ATP</name>
        <dbReference type="ChEBI" id="CHEBI:30616"/>
    </ligand>
</feature>
<feature type="binding site" evidence="5 12">
    <location>
        <position position="71"/>
    </location>
    <ligand>
        <name>ATP</name>
        <dbReference type="ChEBI" id="CHEBI:30616"/>
    </ligand>
</feature>
<feature type="binding site" evidence="1 5 12">
    <location>
        <position position="87"/>
    </location>
    <ligand>
        <name>ATP</name>
        <dbReference type="ChEBI" id="CHEBI:30616"/>
    </ligand>
</feature>
<feature type="binding site" evidence="5 12">
    <location>
        <begin position="133"/>
        <end position="135"/>
    </location>
    <ligand>
        <name>ATP</name>
        <dbReference type="ChEBI" id="CHEBI:30616"/>
    </ligand>
</feature>
<feature type="binding site" evidence="5 12">
    <location>
        <begin position="185"/>
        <end position="186"/>
    </location>
    <ligand>
        <name>ATP</name>
        <dbReference type="ChEBI" id="CHEBI:30616"/>
    </ligand>
</feature>
<feature type="binding site" evidence="5 12">
    <location>
        <position position="205"/>
    </location>
    <ligand>
        <name>ATP</name>
        <dbReference type="ChEBI" id="CHEBI:30616"/>
    </ligand>
</feature>
<feature type="modified residue" description="Phosphoserine" evidence="6 13">
    <location>
        <position position="20"/>
    </location>
</feature>
<feature type="modified residue" description="Phosphoserine" evidence="6">
    <location>
        <position position="213"/>
    </location>
</feature>
<feature type="lipid moiety-binding region" description="N-myristoyl glycine" evidence="2">
    <location>
        <position position="2"/>
    </location>
</feature>
<feature type="mutagenesis site" description="Phosphorylation null-mimic mutant." evidence="6">
    <original>S</original>
    <variation>A</variation>
    <location>
        <position position="20"/>
    </location>
</feature>
<feature type="mutagenesis site" description="Constitutive phosphorylation-mimic mutant." evidence="6">
    <original>S</original>
    <variation>D</variation>
    <location>
        <position position="20"/>
    </location>
</feature>
<feature type="mutagenesis site" description="Phosphorylation null-mimic mutant." evidence="6">
    <original>S</original>
    <variation>A</variation>
    <location>
        <position position="213"/>
    </location>
</feature>
<feature type="mutagenesis site" description="Slightly reduces BSK8 protein phosphorylation." evidence="4">
    <original>S</original>
    <variation>A</variation>
    <location>
        <position position="213"/>
    </location>
</feature>
<feature type="mutagenesis site" description="Constitutive phosphorylation-mimic mutant." evidence="6">
    <original>S</original>
    <variation>D</variation>
    <location>
        <position position="213"/>
    </location>
</feature>
<feature type="sequence conflict" description="In Ref. 4; BAC42231." evidence="8" ref="4">
    <original>I</original>
    <variation>V</variation>
    <location>
        <position position="286"/>
    </location>
</feature>
<feature type="helix" evidence="15">
    <location>
        <begin position="46"/>
        <end position="52"/>
    </location>
</feature>
<feature type="turn" evidence="15">
    <location>
        <begin position="53"/>
        <end position="56"/>
    </location>
</feature>
<feature type="helix" evidence="15">
    <location>
        <begin position="58"/>
        <end position="60"/>
    </location>
</feature>
<feature type="strand" evidence="15">
    <location>
        <begin position="63"/>
        <end position="65"/>
    </location>
</feature>
<feature type="strand" evidence="15">
    <location>
        <begin position="67"/>
        <end position="70"/>
    </location>
</feature>
<feature type="strand" evidence="15">
    <location>
        <begin position="73"/>
        <end position="77"/>
    </location>
</feature>
<feature type="strand" evidence="15">
    <location>
        <begin position="83"/>
        <end position="88"/>
    </location>
</feature>
<feature type="helix" evidence="16">
    <location>
        <begin position="91"/>
        <end position="93"/>
    </location>
</feature>
<feature type="helix" evidence="15">
    <location>
        <begin position="97"/>
        <end position="108"/>
    </location>
</feature>
<feature type="strand" evidence="15">
    <location>
        <begin position="118"/>
        <end position="122"/>
    </location>
</feature>
<feature type="helix" evidence="15">
    <location>
        <begin position="124"/>
        <end position="126"/>
    </location>
</feature>
<feature type="strand" evidence="15">
    <location>
        <begin position="129"/>
        <end position="133"/>
    </location>
</feature>
<feature type="helix" evidence="15">
    <location>
        <begin position="140"/>
        <end position="145"/>
    </location>
</feature>
<feature type="strand" evidence="15">
    <location>
        <begin position="148"/>
        <end position="150"/>
    </location>
</feature>
<feature type="helix" evidence="15">
    <location>
        <begin position="154"/>
        <end position="173"/>
    </location>
</feature>
<feature type="strand" evidence="15">
    <location>
        <begin position="186"/>
        <end position="189"/>
    </location>
</feature>
<feature type="strand" evidence="15">
    <location>
        <begin position="195"/>
        <end position="198"/>
    </location>
</feature>
<feature type="helix" evidence="15">
    <location>
        <begin position="199"/>
        <end position="202"/>
    </location>
</feature>
<feature type="strand" evidence="14">
    <location>
        <begin position="205"/>
        <end position="209"/>
    </location>
</feature>
<feature type="helix" evidence="15">
    <location>
        <begin position="216"/>
        <end position="218"/>
    </location>
</feature>
<feature type="helix" evidence="15">
    <location>
        <begin position="221"/>
        <end position="226"/>
    </location>
</feature>
<feature type="helix" evidence="15">
    <location>
        <begin position="231"/>
        <end position="247"/>
    </location>
</feature>
<feature type="helix" evidence="15">
    <location>
        <begin position="253"/>
        <end position="261"/>
    </location>
</feature>
<feature type="helix" evidence="15">
    <location>
        <begin position="265"/>
        <end position="268"/>
    </location>
</feature>
<feature type="helix" evidence="15">
    <location>
        <begin position="271"/>
        <end position="273"/>
    </location>
</feature>
<feature type="helix" evidence="15">
    <location>
        <begin position="279"/>
        <end position="292"/>
    </location>
</feature>
<feature type="helix" evidence="15">
    <location>
        <begin position="297"/>
        <end position="299"/>
    </location>
</feature>
<feature type="helix" evidence="15">
    <location>
        <begin position="303"/>
        <end position="310"/>
    </location>
</feature>
<feature type="helix" evidence="15">
    <location>
        <begin position="311"/>
        <end position="313"/>
    </location>
</feature>
<feature type="helix" evidence="15">
    <location>
        <begin position="321"/>
        <end position="325"/>
    </location>
</feature>
<gene>
    <name evidence="7" type="primary">BSK8</name>
    <name evidence="10" type="ordered locus">At5g41260</name>
    <name evidence="11" type="ORF">K1O13.5</name>
</gene>
<keyword id="KW-0002">3D-structure</keyword>
<keyword id="KW-0067">ATP-binding</keyword>
<keyword id="KW-1070">Brassinosteroid signaling pathway</keyword>
<keyword id="KW-1003">Cell membrane</keyword>
<keyword id="KW-0418">Kinase</keyword>
<keyword id="KW-0449">Lipoprotein</keyword>
<keyword id="KW-0472">Membrane</keyword>
<keyword id="KW-0519">Myristate</keyword>
<keyword id="KW-0547">Nucleotide-binding</keyword>
<keyword id="KW-0597">Phosphoprotein</keyword>
<keyword id="KW-1185">Reference proteome</keyword>
<keyword id="KW-0723">Serine/threonine-protein kinase</keyword>
<keyword id="KW-0808">Transferase</keyword>
<organism>
    <name type="scientific">Arabidopsis thaliana</name>
    <name type="common">Mouse-ear cress</name>
    <dbReference type="NCBI Taxonomy" id="3702"/>
    <lineage>
        <taxon>Eukaryota</taxon>
        <taxon>Viridiplantae</taxon>
        <taxon>Streptophyta</taxon>
        <taxon>Embryophyta</taxon>
        <taxon>Tracheophyta</taxon>
        <taxon>Spermatophyta</taxon>
        <taxon>Magnoliopsida</taxon>
        <taxon>eudicotyledons</taxon>
        <taxon>Gunneridae</taxon>
        <taxon>Pentapetalae</taxon>
        <taxon>rosids</taxon>
        <taxon>malvids</taxon>
        <taxon>Brassicales</taxon>
        <taxon>Brassicaceae</taxon>
        <taxon>Camelineae</taxon>
        <taxon>Arabidopsis</taxon>
    </lineage>
</organism>
<comment type="function">
    <text evidence="4 6">Probable serine/threonine kinase that acts as a positive regulator of brassinosteroid (BR) signaling downstream of the receptor kinase BRI1. Functions redundantly with BSK3, BSK4, BSK6 and BSK7 (PubMed:23496207). Involved in the regulation of sucrose-phosphate synthase 1 (SPS1) in the context of sucrose resuply after starvation. Activates BSL2, a phosphatase that may dephosphorylate SPS1, leading to the activation of SPS1 (PubMed:24924143).</text>
</comment>
<comment type="catalytic activity">
    <reaction evidence="8">
        <text>L-seryl-[protein] + ATP = O-phospho-L-seryl-[protein] + ADP + H(+)</text>
        <dbReference type="Rhea" id="RHEA:17989"/>
        <dbReference type="Rhea" id="RHEA-COMP:9863"/>
        <dbReference type="Rhea" id="RHEA-COMP:11604"/>
        <dbReference type="ChEBI" id="CHEBI:15378"/>
        <dbReference type="ChEBI" id="CHEBI:29999"/>
        <dbReference type="ChEBI" id="CHEBI:30616"/>
        <dbReference type="ChEBI" id="CHEBI:83421"/>
        <dbReference type="ChEBI" id="CHEBI:456216"/>
        <dbReference type="EC" id="2.7.11.1"/>
    </reaction>
</comment>
<comment type="catalytic activity">
    <reaction evidence="8">
        <text>L-threonyl-[protein] + ATP = O-phospho-L-threonyl-[protein] + ADP + H(+)</text>
        <dbReference type="Rhea" id="RHEA:46608"/>
        <dbReference type="Rhea" id="RHEA-COMP:11060"/>
        <dbReference type="Rhea" id="RHEA-COMP:11605"/>
        <dbReference type="ChEBI" id="CHEBI:15378"/>
        <dbReference type="ChEBI" id="CHEBI:30013"/>
        <dbReference type="ChEBI" id="CHEBI:30616"/>
        <dbReference type="ChEBI" id="CHEBI:61977"/>
        <dbReference type="ChEBI" id="CHEBI:456216"/>
        <dbReference type="EC" id="2.7.11.1"/>
    </reaction>
</comment>
<comment type="subunit">
    <text evidence="4 6">Interacts with ASK7/BIN2, BSK1, BSK5, BSK6 and BSK11 (PubMed:23496207). Interacts with BSL2 (PubMed:24924143).</text>
</comment>
<comment type="subcellular location">
    <subcellularLocation>
        <location evidence="3">Cell membrane</location>
        <topology evidence="9">Lipid-anchor</topology>
    </subcellularLocation>
</comment>
<comment type="PTM">
    <text evidence="4">Phosphorylated by BRI1, ASK7/BIN2 and ASK9/BIL2.</text>
</comment>
<comment type="similarity">
    <text evidence="8">Belongs to the protein kinase superfamily. Ser/Thr protein kinase family.</text>
</comment>
<accession>Q9FHD7</accession>
<accession>Q8GYJ8</accession>
<name>BSK8_ARATH</name>